<comment type="function">
    <text evidence="1">Required for the assembly of the V0 complex of the vacuolar ATPase (V-ATPase) in the endoplasmic reticulum.</text>
</comment>
<comment type="subcellular location">
    <subcellularLocation>
        <location evidence="1">Endoplasmic reticulum membrane</location>
        <topology evidence="1">Multi-pass membrane protein</topology>
    </subcellularLocation>
    <subcellularLocation>
        <location evidence="1">Endoplasmic reticulum-Golgi intermediate compartment membrane</location>
        <topology evidence="1">Multi-pass membrane protein</topology>
    </subcellularLocation>
    <subcellularLocation>
        <location evidence="1">Cytoplasmic vesicle</location>
        <location evidence="1">COPII-coated vesicle membrane</location>
        <topology evidence="1">Multi-pass membrane protein</topology>
    </subcellularLocation>
</comment>
<comment type="similarity">
    <text evidence="1">Belongs to the VMA21 family.</text>
</comment>
<evidence type="ECO:0000255" key="1">
    <source>
        <dbReference type="HAMAP-Rule" id="MF_03058"/>
    </source>
</evidence>
<evidence type="ECO:0000256" key="2">
    <source>
        <dbReference type="SAM" id="MobiDB-lite"/>
    </source>
</evidence>
<feature type="chain" id="PRO_0000377593" description="Vacuolar ATPase assembly integral membrane protein VMA21">
    <location>
        <begin position="1"/>
        <end position="110"/>
    </location>
</feature>
<feature type="topological domain" description="Cytoplasmic" evidence="1">
    <location>
        <begin position="1"/>
        <end position="44"/>
    </location>
</feature>
<feature type="transmembrane region" description="Helical" evidence="1">
    <location>
        <begin position="45"/>
        <end position="65"/>
    </location>
</feature>
<feature type="topological domain" description="Lumenal" evidence="1">
    <location>
        <begin position="66"/>
        <end position="71"/>
    </location>
</feature>
<feature type="transmembrane region" description="Helical" evidence="1">
    <location>
        <begin position="72"/>
        <end position="92"/>
    </location>
</feature>
<feature type="topological domain" description="Cytoplasmic" evidence="1">
    <location>
        <begin position="93"/>
        <end position="110"/>
    </location>
</feature>
<feature type="region of interest" description="Disordered" evidence="2">
    <location>
        <begin position="1"/>
        <end position="28"/>
    </location>
</feature>
<feature type="short sequence motif" description="Prevents secretion from ER">
    <location>
        <begin position="107"/>
        <end position="110"/>
    </location>
</feature>
<feature type="compositionally biased region" description="Basic and acidic residues" evidence="2">
    <location>
        <begin position="11"/>
        <end position="21"/>
    </location>
</feature>
<name>VMA21_PHANO</name>
<organism>
    <name type="scientific">Phaeosphaeria nodorum (strain SN15 / ATCC MYA-4574 / FGSC 10173)</name>
    <name type="common">Glume blotch fungus</name>
    <name type="synonym">Parastagonospora nodorum</name>
    <dbReference type="NCBI Taxonomy" id="321614"/>
    <lineage>
        <taxon>Eukaryota</taxon>
        <taxon>Fungi</taxon>
        <taxon>Dikarya</taxon>
        <taxon>Ascomycota</taxon>
        <taxon>Pezizomycotina</taxon>
        <taxon>Dothideomycetes</taxon>
        <taxon>Pleosporomycetidae</taxon>
        <taxon>Pleosporales</taxon>
        <taxon>Pleosporineae</taxon>
        <taxon>Phaeosphaeriaceae</taxon>
        <taxon>Parastagonospora</taxon>
    </lineage>
</organism>
<reference key="1">
    <citation type="journal article" date="2007" name="Plant Cell">
        <title>Dothideomycete-plant interactions illuminated by genome sequencing and EST analysis of the wheat pathogen Stagonospora nodorum.</title>
        <authorList>
            <person name="Hane J.K."/>
            <person name="Lowe R.G.T."/>
            <person name="Solomon P.S."/>
            <person name="Tan K.-C."/>
            <person name="Schoch C.L."/>
            <person name="Spatafora J.W."/>
            <person name="Crous P.W."/>
            <person name="Kodira C.D."/>
            <person name="Birren B.W."/>
            <person name="Galagan J.E."/>
            <person name="Torriani S.F.F."/>
            <person name="McDonald B.A."/>
            <person name="Oliver R.P."/>
        </authorList>
    </citation>
    <scope>NUCLEOTIDE SEQUENCE [LARGE SCALE GENOMIC DNA]</scope>
    <source>
        <strain>SN15 / ATCC MYA-4574 / FGSC 10173</strain>
    </source>
</reference>
<proteinExistence type="inferred from homology"/>
<keyword id="KW-0968">Cytoplasmic vesicle</keyword>
<keyword id="KW-0256">Endoplasmic reticulum</keyword>
<keyword id="KW-0472">Membrane</keyword>
<keyword id="KW-0812">Transmembrane</keyword>
<keyword id="KW-1133">Transmembrane helix</keyword>
<protein>
    <recommendedName>
        <fullName evidence="1">Vacuolar ATPase assembly integral membrane protein VMA21</fullName>
    </recommendedName>
</protein>
<accession>Q0UV26</accession>
<sequence>MTTRRIIGQDGEEKTYLDVDPRGPPGPSNISPAVPASVIWKLMSFTFAMITLPIGTYFFTVNYVFGGNATYAGALAAIMANVVLIAYVIMAFKDDQAEQAEDAREAKKEL</sequence>
<gene>
    <name evidence="1" type="primary">VMA21</name>
    <name type="ORF">SNOG_04388</name>
</gene>
<dbReference type="EMBL" id="CH445330">
    <property type="protein sequence ID" value="EAT88148.1"/>
    <property type="molecule type" value="Genomic_DNA"/>
</dbReference>
<dbReference type="RefSeq" id="XP_001794807.1">
    <property type="nucleotide sequence ID" value="XM_001794755.1"/>
</dbReference>
<dbReference type="SMR" id="Q0UV26"/>
<dbReference type="FunCoup" id="Q0UV26">
    <property type="interactions" value="43"/>
</dbReference>
<dbReference type="STRING" id="321614.Q0UV26"/>
<dbReference type="EnsemblFungi" id="SNOT_04388">
    <property type="protein sequence ID" value="SNOT_04388"/>
    <property type="gene ID" value="SNOG_04388"/>
</dbReference>
<dbReference type="GeneID" id="5971675"/>
<dbReference type="KEGG" id="pno:SNOG_04388"/>
<dbReference type="VEuPathDB" id="FungiDB:JI435_043880"/>
<dbReference type="eggNOG" id="ENOG502SBNA">
    <property type="taxonomic scope" value="Eukaryota"/>
</dbReference>
<dbReference type="HOGENOM" id="CLU_154717_1_1_1"/>
<dbReference type="InParanoid" id="Q0UV26"/>
<dbReference type="OMA" id="AMKEDQT"/>
<dbReference type="OrthoDB" id="160405at2759"/>
<dbReference type="Proteomes" id="UP000001055">
    <property type="component" value="Unassembled WGS sequence"/>
</dbReference>
<dbReference type="GO" id="GO:0005789">
    <property type="term" value="C:endoplasmic reticulum membrane"/>
    <property type="evidence" value="ECO:0000318"/>
    <property type="project" value="GO_Central"/>
</dbReference>
<dbReference type="GO" id="GO:0033116">
    <property type="term" value="C:endoplasmic reticulum-Golgi intermediate compartment membrane"/>
    <property type="evidence" value="ECO:0007669"/>
    <property type="project" value="UniProtKB-SubCell"/>
</dbReference>
<dbReference type="GO" id="GO:0012507">
    <property type="term" value="C:ER to Golgi transport vesicle membrane"/>
    <property type="evidence" value="ECO:0007669"/>
    <property type="project" value="UniProtKB-SubCell"/>
</dbReference>
<dbReference type="GO" id="GO:0070072">
    <property type="term" value="P:vacuolar proton-transporting V-type ATPase complex assembly"/>
    <property type="evidence" value="ECO:0000318"/>
    <property type="project" value="GO_Central"/>
</dbReference>
<dbReference type="HAMAP" id="MF_03058">
    <property type="entry name" value="VMA21"/>
    <property type="match status" value="1"/>
</dbReference>
<dbReference type="InterPro" id="IPR019013">
    <property type="entry name" value="Vma21"/>
</dbReference>
<dbReference type="PANTHER" id="PTHR31792">
    <property type="entry name" value="VACUOLAR ATPASE ASSEMBLY INTEGRAL MEMBRANE PROTEIN VMA21"/>
    <property type="match status" value="1"/>
</dbReference>
<dbReference type="PANTHER" id="PTHR31792:SF3">
    <property type="entry name" value="VACUOLAR ATPASE ASSEMBLY INTEGRAL MEMBRANE PROTEIN VMA21"/>
    <property type="match status" value="1"/>
</dbReference>
<dbReference type="Pfam" id="PF09446">
    <property type="entry name" value="VMA21"/>
    <property type="match status" value="1"/>
</dbReference>